<keyword id="KW-0413">Isomerase</keyword>
<keyword id="KW-0697">Rotamase</keyword>
<evidence type="ECO:0000255" key="1">
    <source>
        <dbReference type="PROSITE-ProRule" id="PRU00277"/>
    </source>
</evidence>
<evidence type="ECO:0000305" key="2"/>
<accession>P56989</accession>
<accession>A1IPB7</accession>
<dbReference type="EC" id="5.2.1.8"/>
<dbReference type="EMBL" id="AL157959">
    <property type="protein sequence ID" value="CAM07579.1"/>
    <property type="molecule type" value="Genomic_DNA"/>
</dbReference>
<dbReference type="PIR" id="E82022">
    <property type="entry name" value="E82022"/>
</dbReference>
<dbReference type="RefSeq" id="WP_002215210.1">
    <property type="nucleotide sequence ID" value="NC_003116.1"/>
</dbReference>
<dbReference type="SMR" id="P56989"/>
<dbReference type="EnsemblBacteria" id="CAM07579">
    <property type="protein sequence ID" value="CAM07579"/>
    <property type="gene ID" value="NMA0273"/>
</dbReference>
<dbReference type="KEGG" id="nma:NMA0273"/>
<dbReference type="HOGENOM" id="CLU_013615_12_0_4"/>
<dbReference type="Proteomes" id="UP000000626">
    <property type="component" value="Chromosome"/>
</dbReference>
<dbReference type="GO" id="GO:0003755">
    <property type="term" value="F:peptidyl-prolyl cis-trans isomerase activity"/>
    <property type="evidence" value="ECO:0007669"/>
    <property type="project" value="UniProtKB-KW"/>
</dbReference>
<dbReference type="GO" id="GO:0006457">
    <property type="term" value="P:protein folding"/>
    <property type="evidence" value="ECO:0007669"/>
    <property type="project" value="UniProtKB-ARBA"/>
</dbReference>
<dbReference type="FunFam" id="3.10.50.40:FF:000006">
    <property type="entry name" value="Peptidyl-prolyl cis-trans isomerase"/>
    <property type="match status" value="1"/>
</dbReference>
<dbReference type="Gene3D" id="3.10.50.40">
    <property type="match status" value="1"/>
</dbReference>
<dbReference type="InterPro" id="IPR046357">
    <property type="entry name" value="PPIase_dom_sf"/>
</dbReference>
<dbReference type="InterPro" id="IPR001179">
    <property type="entry name" value="PPIase_FKBP_dom"/>
</dbReference>
<dbReference type="PANTHER" id="PTHR43811:SF19">
    <property type="entry name" value="39 KDA FK506-BINDING NUCLEAR PROTEIN"/>
    <property type="match status" value="1"/>
</dbReference>
<dbReference type="PANTHER" id="PTHR43811">
    <property type="entry name" value="FKBP-TYPE PEPTIDYL-PROLYL CIS-TRANS ISOMERASE FKPA"/>
    <property type="match status" value="1"/>
</dbReference>
<dbReference type="Pfam" id="PF00254">
    <property type="entry name" value="FKBP_C"/>
    <property type="match status" value="1"/>
</dbReference>
<dbReference type="SUPFAM" id="SSF54534">
    <property type="entry name" value="FKBP-like"/>
    <property type="match status" value="1"/>
</dbReference>
<dbReference type="PROSITE" id="PS50059">
    <property type="entry name" value="FKBP_PPIASE"/>
    <property type="match status" value="1"/>
</dbReference>
<gene>
    <name type="primary">fbp</name>
    <name type="ordered locus">NMA0273</name>
</gene>
<name>FKBP_NEIMA</name>
<organism>
    <name type="scientific">Neisseria meningitidis serogroup A / serotype 4A (strain DSM 15465 / Z2491)</name>
    <dbReference type="NCBI Taxonomy" id="122587"/>
    <lineage>
        <taxon>Bacteria</taxon>
        <taxon>Pseudomonadati</taxon>
        <taxon>Pseudomonadota</taxon>
        <taxon>Betaproteobacteria</taxon>
        <taxon>Neisseriales</taxon>
        <taxon>Neisseriaceae</taxon>
        <taxon>Neisseria</taxon>
    </lineage>
</organism>
<reference key="1">
    <citation type="journal article" date="2000" name="Nature">
        <title>Complete DNA sequence of a serogroup A strain of Neisseria meningitidis Z2491.</title>
        <authorList>
            <person name="Parkhill J."/>
            <person name="Achtman M."/>
            <person name="James K.D."/>
            <person name="Bentley S.D."/>
            <person name="Churcher C.M."/>
            <person name="Klee S.R."/>
            <person name="Morelli G."/>
            <person name="Basham D."/>
            <person name="Brown D."/>
            <person name="Chillingworth T."/>
            <person name="Davies R.M."/>
            <person name="Davis P."/>
            <person name="Devlin K."/>
            <person name="Feltwell T."/>
            <person name="Hamlin N."/>
            <person name="Holroyd S."/>
            <person name="Jagels K."/>
            <person name="Leather S."/>
            <person name="Moule S."/>
            <person name="Mungall K.L."/>
            <person name="Quail M.A."/>
            <person name="Rajandream M.A."/>
            <person name="Rutherford K.M."/>
            <person name="Simmonds M."/>
            <person name="Skelton J."/>
            <person name="Whitehead S."/>
            <person name="Spratt B.G."/>
            <person name="Barrell B.G."/>
        </authorList>
    </citation>
    <scope>NUCLEOTIDE SEQUENCE [LARGE SCALE GENOMIC DNA]</scope>
    <source>
        <strain>DSM 15465 / Z2491</strain>
    </source>
</reference>
<proteinExistence type="inferred from homology"/>
<sequence>MGSLIIEDLQEGFGKEAVKGKEITVHYTGWLENGTKFDSSLDRRQPLTITLGVGQVIKGWDEGFGGMKEGGKRKLTIPSEMGYGARGAGGVIPPHATLIFEVELLKVYE</sequence>
<comment type="function">
    <text>PPIases accelerate the folding of proteins.</text>
</comment>
<comment type="catalytic activity">
    <reaction>
        <text>[protein]-peptidylproline (omega=180) = [protein]-peptidylproline (omega=0)</text>
        <dbReference type="Rhea" id="RHEA:16237"/>
        <dbReference type="Rhea" id="RHEA-COMP:10747"/>
        <dbReference type="Rhea" id="RHEA-COMP:10748"/>
        <dbReference type="ChEBI" id="CHEBI:83833"/>
        <dbReference type="ChEBI" id="CHEBI:83834"/>
        <dbReference type="EC" id="5.2.1.8"/>
    </reaction>
</comment>
<comment type="activity regulation">
    <text>Inhibited by FK506.</text>
</comment>
<comment type="similarity">
    <text evidence="2">Belongs to the FKBP-type PPIase family.</text>
</comment>
<protein>
    <recommendedName>
        <fullName>FK506-binding protein</fullName>
        <ecNumber>5.2.1.8</ecNumber>
    </recommendedName>
    <alternativeName>
        <fullName>Peptidyl-prolyl cis-trans isomerase</fullName>
        <shortName>PPIase</shortName>
    </alternativeName>
    <alternativeName>
        <fullName>Rotamase</fullName>
    </alternativeName>
</protein>
<feature type="chain" id="PRO_0000075350" description="FK506-binding protein">
    <location>
        <begin position="1"/>
        <end position="109"/>
    </location>
</feature>
<feature type="domain" description="PPIase FKBP-type" evidence="1">
    <location>
        <begin position="20"/>
        <end position="108"/>
    </location>
</feature>